<evidence type="ECO:0000255" key="1">
    <source>
        <dbReference type="HAMAP-Rule" id="MF_00302"/>
    </source>
</evidence>
<evidence type="ECO:0000256" key="2">
    <source>
        <dbReference type="SAM" id="MobiDB-lite"/>
    </source>
</evidence>
<organism>
    <name type="scientific">Synechococcus sp. (strain CC9902)</name>
    <dbReference type="NCBI Taxonomy" id="316279"/>
    <lineage>
        <taxon>Bacteria</taxon>
        <taxon>Bacillati</taxon>
        <taxon>Cyanobacteriota</taxon>
        <taxon>Cyanophyceae</taxon>
        <taxon>Synechococcales</taxon>
        <taxon>Synechococcaceae</taxon>
        <taxon>Synechococcus</taxon>
    </lineage>
</organism>
<sequence length="104" mass="11488">MAEETPTRSPGGAAVLDKAPERVRKRSPRYKVLLHNDPVNSMEYVMTTLRQVVPQLSEQDAMAVMLEAHNTGVGLVIVCDIEPAEFYCETLKSKGLTSSIEPED</sequence>
<feature type="chain" id="PRO_1000115484" description="ATP-dependent Clp protease adapter protein ClpS">
    <location>
        <begin position="1"/>
        <end position="104"/>
    </location>
</feature>
<feature type="region of interest" description="Disordered" evidence="2">
    <location>
        <begin position="1"/>
        <end position="20"/>
    </location>
</feature>
<accession>Q3AUR5</accession>
<dbReference type="EMBL" id="CP000097">
    <property type="protein sequence ID" value="ABB26990.1"/>
    <property type="molecule type" value="Genomic_DNA"/>
</dbReference>
<dbReference type="RefSeq" id="WP_011360779.1">
    <property type="nucleotide sequence ID" value="NC_007513.1"/>
</dbReference>
<dbReference type="SMR" id="Q3AUR5"/>
<dbReference type="STRING" id="316279.Syncc9902_2032"/>
<dbReference type="KEGG" id="sye:Syncc9902_2032"/>
<dbReference type="eggNOG" id="COG2127">
    <property type="taxonomic scope" value="Bacteria"/>
</dbReference>
<dbReference type="HOGENOM" id="CLU_134083_1_0_3"/>
<dbReference type="OrthoDB" id="9796121at2"/>
<dbReference type="Proteomes" id="UP000002712">
    <property type="component" value="Chromosome"/>
</dbReference>
<dbReference type="GO" id="GO:0030163">
    <property type="term" value="P:protein catabolic process"/>
    <property type="evidence" value="ECO:0007669"/>
    <property type="project" value="InterPro"/>
</dbReference>
<dbReference type="GO" id="GO:0006508">
    <property type="term" value="P:proteolysis"/>
    <property type="evidence" value="ECO:0007669"/>
    <property type="project" value="UniProtKB-UniRule"/>
</dbReference>
<dbReference type="Gene3D" id="3.30.1390.10">
    <property type="match status" value="1"/>
</dbReference>
<dbReference type="HAMAP" id="MF_00302">
    <property type="entry name" value="ClpS"/>
    <property type="match status" value="1"/>
</dbReference>
<dbReference type="InterPro" id="IPR022935">
    <property type="entry name" value="ClpS"/>
</dbReference>
<dbReference type="InterPro" id="IPR003769">
    <property type="entry name" value="ClpS_core"/>
</dbReference>
<dbReference type="InterPro" id="IPR014719">
    <property type="entry name" value="Ribosomal_bL12_C/ClpS-like"/>
</dbReference>
<dbReference type="NCBIfam" id="NF000671">
    <property type="entry name" value="PRK00033.1-4"/>
    <property type="match status" value="1"/>
</dbReference>
<dbReference type="PANTHER" id="PTHR33473:SF19">
    <property type="entry name" value="ATP-DEPENDENT CLP PROTEASE ADAPTER PROTEIN CLPS"/>
    <property type="match status" value="1"/>
</dbReference>
<dbReference type="PANTHER" id="PTHR33473">
    <property type="entry name" value="ATP-DEPENDENT CLP PROTEASE ADAPTER PROTEIN CLPS1, CHLOROPLASTIC"/>
    <property type="match status" value="1"/>
</dbReference>
<dbReference type="Pfam" id="PF02617">
    <property type="entry name" value="ClpS"/>
    <property type="match status" value="1"/>
</dbReference>
<dbReference type="SUPFAM" id="SSF54736">
    <property type="entry name" value="ClpS-like"/>
    <property type="match status" value="1"/>
</dbReference>
<keyword id="KW-1185">Reference proteome</keyword>
<comment type="function">
    <text evidence="1">Involved in the modulation of the specificity of the ClpAP-mediated ATP-dependent protein degradation.</text>
</comment>
<comment type="subunit">
    <text evidence="1">Binds to the N-terminal domain of the chaperone ClpA.</text>
</comment>
<comment type="similarity">
    <text evidence="1">Belongs to the ClpS family.</text>
</comment>
<reference key="1">
    <citation type="submission" date="2005-08" db="EMBL/GenBank/DDBJ databases">
        <title>Complete sequence of Synechococcus sp. CC9902.</title>
        <authorList>
            <person name="Copeland A."/>
            <person name="Lucas S."/>
            <person name="Lapidus A."/>
            <person name="Barry K."/>
            <person name="Detter J.C."/>
            <person name="Glavina T."/>
            <person name="Hammon N."/>
            <person name="Israni S."/>
            <person name="Pitluck S."/>
            <person name="Martinez M."/>
            <person name="Schmutz J."/>
            <person name="Larimer F."/>
            <person name="Land M."/>
            <person name="Kyrpides N."/>
            <person name="Ivanova N."/>
            <person name="Richardson P."/>
        </authorList>
    </citation>
    <scope>NUCLEOTIDE SEQUENCE [LARGE SCALE GENOMIC DNA]</scope>
    <source>
        <strain>CC9902</strain>
    </source>
</reference>
<protein>
    <recommendedName>
        <fullName evidence="1">ATP-dependent Clp protease adapter protein ClpS</fullName>
    </recommendedName>
</protein>
<proteinExistence type="inferred from homology"/>
<gene>
    <name evidence="1" type="primary">clpS</name>
    <name type="ordered locus">Syncc9902_2032</name>
</gene>
<name>CLPS_SYNS9</name>